<name>THIG_FUSNN</name>
<accession>Q8RI63</accession>
<proteinExistence type="inferred from homology"/>
<feature type="chain" id="PRO_0000162821" description="Thiazole synthase">
    <location>
        <begin position="1"/>
        <end position="257"/>
    </location>
</feature>
<feature type="active site" description="Schiff-base intermediate with DXP" evidence="1">
    <location>
        <position position="95"/>
    </location>
</feature>
<feature type="binding site" evidence="1">
    <location>
        <position position="156"/>
    </location>
    <ligand>
        <name>1-deoxy-D-xylulose 5-phosphate</name>
        <dbReference type="ChEBI" id="CHEBI:57792"/>
    </ligand>
</feature>
<feature type="binding site" evidence="1">
    <location>
        <begin position="182"/>
        <end position="183"/>
    </location>
    <ligand>
        <name>1-deoxy-D-xylulose 5-phosphate</name>
        <dbReference type="ChEBI" id="CHEBI:57792"/>
    </ligand>
</feature>
<feature type="binding site" evidence="1">
    <location>
        <begin position="204"/>
        <end position="205"/>
    </location>
    <ligand>
        <name>1-deoxy-D-xylulose 5-phosphate</name>
        <dbReference type="ChEBI" id="CHEBI:57792"/>
    </ligand>
</feature>
<organism>
    <name type="scientific">Fusobacterium nucleatum subsp. nucleatum (strain ATCC 25586 / DSM 15643 / BCRC 10681 / CIP 101130 / JCM 8532 / KCTC 2640 / LMG 13131 / VPI 4355)</name>
    <dbReference type="NCBI Taxonomy" id="190304"/>
    <lineage>
        <taxon>Bacteria</taxon>
        <taxon>Fusobacteriati</taxon>
        <taxon>Fusobacteriota</taxon>
        <taxon>Fusobacteriia</taxon>
        <taxon>Fusobacteriales</taxon>
        <taxon>Fusobacteriaceae</taxon>
        <taxon>Fusobacterium</taxon>
    </lineage>
</organism>
<keyword id="KW-0963">Cytoplasm</keyword>
<keyword id="KW-1185">Reference proteome</keyword>
<keyword id="KW-0704">Schiff base</keyword>
<keyword id="KW-0784">Thiamine biosynthesis</keyword>
<keyword id="KW-0808">Transferase</keyword>
<dbReference type="EC" id="2.8.1.10" evidence="1"/>
<dbReference type="EMBL" id="AE009951">
    <property type="protein sequence ID" value="AAL93869.1"/>
    <property type="molecule type" value="Genomic_DNA"/>
</dbReference>
<dbReference type="RefSeq" id="NP_602570.1">
    <property type="nucleotide sequence ID" value="NC_003454.1"/>
</dbReference>
<dbReference type="RefSeq" id="WP_011015814.1">
    <property type="nucleotide sequence ID" value="NZ_CP028101.1"/>
</dbReference>
<dbReference type="SMR" id="Q8RI63"/>
<dbReference type="FunCoup" id="Q8RI63">
    <property type="interactions" value="184"/>
</dbReference>
<dbReference type="STRING" id="190304.FN1754"/>
<dbReference type="PaxDb" id="190304-FN1754"/>
<dbReference type="EnsemblBacteria" id="AAL93869">
    <property type="protein sequence ID" value="AAL93869"/>
    <property type="gene ID" value="FN1754"/>
</dbReference>
<dbReference type="GeneID" id="79782682"/>
<dbReference type="KEGG" id="fnu:FN1754"/>
<dbReference type="PATRIC" id="fig|190304.8.peg.243"/>
<dbReference type="eggNOG" id="COG2022">
    <property type="taxonomic scope" value="Bacteria"/>
</dbReference>
<dbReference type="HOGENOM" id="CLU_062233_1_0_0"/>
<dbReference type="InParanoid" id="Q8RI63"/>
<dbReference type="BioCyc" id="FNUC190304:G1FZS-252-MONOMER"/>
<dbReference type="UniPathway" id="UPA00060"/>
<dbReference type="Proteomes" id="UP000002521">
    <property type="component" value="Chromosome"/>
</dbReference>
<dbReference type="GO" id="GO:1902508">
    <property type="term" value="C:2-iminoacetate synthase complex"/>
    <property type="evidence" value="ECO:0000318"/>
    <property type="project" value="GO_Central"/>
</dbReference>
<dbReference type="GO" id="GO:0005737">
    <property type="term" value="C:cytoplasm"/>
    <property type="evidence" value="ECO:0007669"/>
    <property type="project" value="UniProtKB-SubCell"/>
</dbReference>
<dbReference type="GO" id="GO:1990107">
    <property type="term" value="F:thiazole synthase activity"/>
    <property type="evidence" value="ECO:0007669"/>
    <property type="project" value="UniProtKB-EC"/>
</dbReference>
<dbReference type="GO" id="GO:0009228">
    <property type="term" value="P:thiamine biosynthetic process"/>
    <property type="evidence" value="ECO:0000318"/>
    <property type="project" value="GO_Central"/>
</dbReference>
<dbReference type="GO" id="GO:0009229">
    <property type="term" value="P:thiamine diphosphate biosynthetic process"/>
    <property type="evidence" value="ECO:0000318"/>
    <property type="project" value="GO_Central"/>
</dbReference>
<dbReference type="CDD" id="cd04728">
    <property type="entry name" value="ThiG"/>
    <property type="match status" value="1"/>
</dbReference>
<dbReference type="Gene3D" id="3.20.20.70">
    <property type="entry name" value="Aldolase class I"/>
    <property type="match status" value="1"/>
</dbReference>
<dbReference type="HAMAP" id="MF_00443">
    <property type="entry name" value="ThiG"/>
    <property type="match status" value="1"/>
</dbReference>
<dbReference type="InterPro" id="IPR013785">
    <property type="entry name" value="Aldolase_TIM"/>
</dbReference>
<dbReference type="InterPro" id="IPR033983">
    <property type="entry name" value="Thiazole_synthase_ThiG"/>
</dbReference>
<dbReference type="InterPro" id="IPR008867">
    <property type="entry name" value="ThiG"/>
</dbReference>
<dbReference type="PANTHER" id="PTHR34266">
    <property type="entry name" value="THIAZOLE SYNTHASE"/>
    <property type="match status" value="1"/>
</dbReference>
<dbReference type="PANTHER" id="PTHR34266:SF2">
    <property type="entry name" value="THIAZOLE SYNTHASE"/>
    <property type="match status" value="1"/>
</dbReference>
<dbReference type="Pfam" id="PF05690">
    <property type="entry name" value="ThiG"/>
    <property type="match status" value="1"/>
</dbReference>
<dbReference type="SUPFAM" id="SSF110399">
    <property type="entry name" value="ThiG-like"/>
    <property type="match status" value="1"/>
</dbReference>
<evidence type="ECO:0000255" key="1">
    <source>
        <dbReference type="HAMAP-Rule" id="MF_00443"/>
    </source>
</evidence>
<sequence length="257" mass="27878">MKDSFKLGNKEFNSRFILGSGKYSNELINSAINYAEAEIVTVAMRRAVSGVQENILDYIPKNITLLPNTSGARNAEEAVKIARLARECIQGDFIKIEVIKDSKYLLPDNYETIKATEILAKEGFIVMPYMYPDLNVARALRDAGASCIMPLAAPIGSNRGLITKEFIQILIDEIDLPIIVDAGIGKPSQACEAIEMGVTAIMANTAIATANDIPRMARAFKYAIQAGREAYLAKLGRVLEKGASASSPLTGFLNGVE</sequence>
<reference key="1">
    <citation type="journal article" date="2002" name="J. Bacteriol.">
        <title>Genome sequence and analysis of the oral bacterium Fusobacterium nucleatum strain ATCC 25586.</title>
        <authorList>
            <person name="Kapatral V."/>
            <person name="Anderson I."/>
            <person name="Ivanova N."/>
            <person name="Reznik G."/>
            <person name="Los T."/>
            <person name="Lykidis A."/>
            <person name="Bhattacharyya A."/>
            <person name="Bartman A."/>
            <person name="Gardner W."/>
            <person name="Grechkin G."/>
            <person name="Zhu L."/>
            <person name="Vasieva O."/>
            <person name="Chu L."/>
            <person name="Kogan Y."/>
            <person name="Chaga O."/>
            <person name="Goltsman E."/>
            <person name="Bernal A."/>
            <person name="Larsen N."/>
            <person name="D'Souza M."/>
            <person name="Walunas T."/>
            <person name="Pusch G."/>
            <person name="Haselkorn R."/>
            <person name="Fonstein M."/>
            <person name="Kyrpides N.C."/>
            <person name="Overbeek R."/>
        </authorList>
    </citation>
    <scope>NUCLEOTIDE SEQUENCE [LARGE SCALE GENOMIC DNA]</scope>
    <source>
        <strain>ATCC 25586 / DSM 15643 / BCRC 10681 / CIP 101130 / JCM 8532 / KCTC 2640 / LMG 13131 / VPI 4355</strain>
    </source>
</reference>
<protein>
    <recommendedName>
        <fullName evidence="1">Thiazole synthase</fullName>
        <ecNumber evidence="1">2.8.1.10</ecNumber>
    </recommendedName>
</protein>
<comment type="function">
    <text evidence="1">Catalyzes the rearrangement of 1-deoxy-D-xylulose 5-phosphate (DXP) to produce the thiazole phosphate moiety of thiamine. Sulfur is provided by the thiocarboxylate moiety of the carrier protein ThiS. In vitro, sulfur can be provided by H(2)S.</text>
</comment>
<comment type="catalytic activity">
    <reaction evidence="1">
        <text>[ThiS sulfur-carrier protein]-C-terminal-Gly-aminoethanethioate + 2-iminoacetate + 1-deoxy-D-xylulose 5-phosphate = [ThiS sulfur-carrier protein]-C-terminal Gly-Gly + 2-[(2R,5Z)-2-carboxy-4-methylthiazol-5(2H)-ylidene]ethyl phosphate + 2 H2O + H(+)</text>
        <dbReference type="Rhea" id="RHEA:26297"/>
        <dbReference type="Rhea" id="RHEA-COMP:12909"/>
        <dbReference type="Rhea" id="RHEA-COMP:19908"/>
        <dbReference type="ChEBI" id="CHEBI:15377"/>
        <dbReference type="ChEBI" id="CHEBI:15378"/>
        <dbReference type="ChEBI" id="CHEBI:57792"/>
        <dbReference type="ChEBI" id="CHEBI:62899"/>
        <dbReference type="ChEBI" id="CHEBI:77846"/>
        <dbReference type="ChEBI" id="CHEBI:90778"/>
        <dbReference type="ChEBI" id="CHEBI:232372"/>
        <dbReference type="EC" id="2.8.1.10"/>
    </reaction>
</comment>
<comment type="pathway">
    <text evidence="1">Cofactor biosynthesis; thiamine diphosphate biosynthesis.</text>
</comment>
<comment type="subunit">
    <text evidence="1">Homotetramer. Forms heterodimers with either ThiH or ThiS.</text>
</comment>
<comment type="subcellular location">
    <subcellularLocation>
        <location evidence="1">Cytoplasm</location>
    </subcellularLocation>
</comment>
<comment type="similarity">
    <text evidence="1">Belongs to the ThiG family.</text>
</comment>
<gene>
    <name evidence="1" type="primary">thiG</name>
    <name type="ordered locus">FN1754</name>
</gene>